<reference key="1">
    <citation type="submission" date="2005-04" db="EMBL/GenBank/DDBJ databases">
        <authorList>
            <consortium name="NIH - Zebrafish Gene Collection (ZGC) project"/>
        </authorList>
    </citation>
    <scope>NUCLEOTIDE SEQUENCE [LARGE SCALE MRNA]</scope>
    <source>
        <tissue>Brain</tissue>
        <tissue>Eye</tissue>
    </source>
</reference>
<reference key="2">
    <citation type="journal article" date="2008" name="J. Proteome Res.">
        <title>Online automated in vivo zebrafish phosphoproteomics: from large-scale analysis down to a single embryo.</title>
        <authorList>
            <person name="Lemeer S."/>
            <person name="Pinkse M.W.H."/>
            <person name="Mohammed S."/>
            <person name="van Breukelen B."/>
            <person name="den Hertog J."/>
            <person name="Slijper M."/>
            <person name="Heck A.J.R."/>
        </authorList>
    </citation>
    <scope>PHOSPHORYLATION [LARGE SCALE ANALYSIS] AT SER-33</scope>
    <scope>IDENTIFICATION BY MASS SPECTROMETRY</scope>
    <source>
        <tissue>Embryo</tissue>
    </source>
</reference>
<gene>
    <name type="primary">nsrp1</name>
    <name type="synonym">ccdc55</name>
    <name type="ORF">wu:fc14d05</name>
    <name type="ORF">zgc:152777</name>
</gene>
<dbReference type="EMBL" id="BC076130">
    <property type="protein sequence ID" value="AAH76130.1"/>
    <property type="status" value="ALT_INIT"/>
    <property type="molecule type" value="mRNA"/>
</dbReference>
<dbReference type="EMBL" id="BC092757">
    <property type="protein sequence ID" value="AAH92757.1"/>
    <property type="status" value="ALT_INIT"/>
    <property type="molecule type" value="mRNA"/>
</dbReference>
<dbReference type="EMBL" id="BC110090">
    <property type="protein sequence ID" value="AAI10091.1"/>
    <property type="status" value="ALT_INIT"/>
    <property type="molecule type" value="mRNA"/>
</dbReference>
<dbReference type="FunCoup" id="Q568R1">
    <property type="interactions" value="1506"/>
</dbReference>
<dbReference type="STRING" id="7955.ENSDARP00000013430"/>
<dbReference type="iPTMnet" id="Q568R1"/>
<dbReference type="PaxDb" id="7955-ENSDARP00000013430"/>
<dbReference type="AGR" id="ZFIN:ZDB-GENE-030131-2646"/>
<dbReference type="ZFIN" id="ZDB-GENE-030131-2646">
    <property type="gene designation" value="nsrp1"/>
</dbReference>
<dbReference type="eggNOG" id="KOG2117">
    <property type="taxonomic scope" value="Eukaryota"/>
</dbReference>
<dbReference type="InParanoid" id="Q568R1"/>
<dbReference type="Reactome" id="R-DRE-72163">
    <property type="pathway name" value="mRNA Splicing - Major Pathway"/>
</dbReference>
<dbReference type="PRO" id="PR:Q568R1"/>
<dbReference type="Proteomes" id="UP000000437">
    <property type="component" value="Unplaced"/>
</dbReference>
<dbReference type="GO" id="GO:0000381">
    <property type="term" value="P:regulation of alternative mRNA splicing, via spliceosome"/>
    <property type="evidence" value="ECO:0007669"/>
    <property type="project" value="InterPro"/>
</dbReference>
<dbReference type="InterPro" id="IPR042816">
    <property type="entry name" value="Nsrp1"/>
</dbReference>
<dbReference type="InterPro" id="IPR018612">
    <property type="entry name" value="NSRP1_N"/>
</dbReference>
<dbReference type="PANTHER" id="PTHR31938">
    <property type="entry name" value="NUCLEAR SPECKLE SPLICING REGULATORY PROTEIN 1"/>
    <property type="match status" value="1"/>
</dbReference>
<dbReference type="PANTHER" id="PTHR31938:SF4">
    <property type="entry name" value="NUCLEAR SPECKLE SPLICING REGULATORY PROTEIN 1"/>
    <property type="match status" value="1"/>
</dbReference>
<dbReference type="Pfam" id="PF09745">
    <property type="entry name" value="NSRP1_N"/>
    <property type="match status" value="1"/>
</dbReference>
<feature type="chain" id="PRO_0000240437" description="Nuclear speckle splicing regulatory protein 1">
    <location>
        <begin position="1"/>
        <end position="516"/>
    </location>
</feature>
<feature type="region of interest" description="Disordered" evidence="2">
    <location>
        <begin position="1"/>
        <end position="43"/>
    </location>
</feature>
<feature type="region of interest" description="Disordered" evidence="2">
    <location>
        <begin position="111"/>
        <end position="137"/>
    </location>
</feature>
<feature type="region of interest" description="Disordered" evidence="2">
    <location>
        <begin position="151"/>
        <end position="170"/>
    </location>
</feature>
<feature type="region of interest" description="Disordered" evidence="2">
    <location>
        <begin position="188"/>
        <end position="494"/>
    </location>
</feature>
<feature type="coiled-coil region" evidence="1">
    <location>
        <begin position="100"/>
        <end position="176"/>
    </location>
</feature>
<feature type="coiled-coil region" evidence="1">
    <location>
        <begin position="358"/>
        <end position="401"/>
    </location>
</feature>
<feature type="compositionally biased region" description="Low complexity" evidence="2">
    <location>
        <begin position="207"/>
        <end position="221"/>
    </location>
</feature>
<feature type="compositionally biased region" description="Basic and acidic residues" evidence="2">
    <location>
        <begin position="222"/>
        <end position="239"/>
    </location>
</feature>
<feature type="compositionally biased region" description="Basic and acidic residues" evidence="2">
    <location>
        <begin position="271"/>
        <end position="466"/>
    </location>
</feature>
<feature type="modified residue" description="Phosphoserine" evidence="3">
    <location>
        <position position="33"/>
    </location>
</feature>
<feature type="sequence conflict" description="In Ref. 1; AAH76130." evidence="4" ref="1">
    <original>N</original>
    <variation>D</variation>
    <location>
        <position position="337"/>
    </location>
</feature>
<feature type="sequence conflict" description="In Ref. 1; AAH76130." evidence="4" ref="1">
    <original>I</original>
    <variation>K</variation>
    <location>
        <position position="342"/>
    </location>
</feature>
<feature type="sequence conflict" description="In Ref. 1; AAH76130." evidence="4" ref="1">
    <original>N</original>
    <variation>D</variation>
    <location>
        <position position="384"/>
    </location>
</feature>
<feature type="sequence conflict" description="In Ref. 1; AAH76130." evidence="4" ref="1">
    <original>K</original>
    <variation>E</variation>
    <location>
        <position position="453"/>
    </location>
</feature>
<feature type="sequence conflict" description="In Ref. 1; AAH76130." evidence="4" ref="1">
    <original>K</original>
    <variation>E</variation>
    <location>
        <position position="513"/>
    </location>
</feature>
<accession>Q568R1</accession>
<accession>Q2YDS6</accession>
<accession>Q6DH52</accession>
<comment type="similarity">
    <text evidence="4">Belongs to the NSRP1 family.</text>
</comment>
<comment type="sequence caution" evidence="4">
    <conflict type="erroneous initiation">
        <sequence resource="EMBL-CDS" id="AAH76130"/>
    </conflict>
    <text>Extended N-terminus.</text>
</comment>
<comment type="sequence caution" evidence="4">
    <conflict type="erroneous initiation">
        <sequence resource="EMBL-CDS" id="AAH92757"/>
    </conflict>
    <text>Extended N-terminus.</text>
</comment>
<comment type="sequence caution" evidence="4">
    <conflict type="erroneous initiation">
        <sequence resource="EMBL-CDS" id="AAI10091"/>
    </conflict>
    <text>Extended N-terminus.</text>
</comment>
<organism>
    <name type="scientific">Danio rerio</name>
    <name type="common">Zebrafish</name>
    <name type="synonym">Brachydanio rerio</name>
    <dbReference type="NCBI Taxonomy" id="7955"/>
    <lineage>
        <taxon>Eukaryota</taxon>
        <taxon>Metazoa</taxon>
        <taxon>Chordata</taxon>
        <taxon>Craniata</taxon>
        <taxon>Vertebrata</taxon>
        <taxon>Euteleostomi</taxon>
        <taxon>Actinopterygii</taxon>
        <taxon>Neopterygii</taxon>
        <taxon>Teleostei</taxon>
        <taxon>Ostariophysi</taxon>
        <taxon>Cypriniformes</taxon>
        <taxon>Danionidae</taxon>
        <taxon>Danioninae</taxon>
        <taxon>Danio</taxon>
    </lineage>
</organism>
<name>NSRP1_DANRE</name>
<proteinExistence type="evidence at protein level"/>
<protein>
    <recommendedName>
        <fullName>Nuclear speckle splicing regulatory protein 1</fullName>
    </recommendedName>
    <alternativeName>
        <fullName>Coiled-coil domain-containing protein 55</fullName>
    </alternativeName>
</protein>
<keyword id="KW-0175">Coiled coil</keyword>
<keyword id="KW-0597">Phosphoprotein</keyword>
<keyword id="KW-1185">Reference proteome</keyword>
<sequence length="516" mass="61240">MATSGKQYGLILPQKRASKSAPLARPSVFGDDSDDETSVGESLQKEAIKKKMMKQTRLEMQKALEEDSTVYEYDNVYDDIQKQRLESNKKLLGGEDKKPKYINQLLRAVEERKKEQERRDERKIQKEREAEGEKFADKEAFVTSAYRQKLKERQEELEREKREAELEAALDVKKQKDLSGFYRHFLNQTVGEEVVPDRSAQSEEKATSSAAAERSPSPESTANRRESEAESHSDDDQVDVKPAFSKTTANNHAKRQYRQKSPLSDSDDGDERERERKEIKEKSHKDRDRDRAKEKERERMRDKDKHSHRKEDRGGDRRRERDREEDRARDRRDRDRNDRHGIRDRRNSSPKDRERDRKGERDRRDNSPKDRERDRKGERDRRDNSPKDRERETRDKSPKDRRDKSPKDRDRERRDKSPKDREPERKGERDIREREDNKVDSQRKNQEDEKSSKSKTEHGKEEKLVEETENSSGAQQEISKFAKRSSDQTVSSARERYLARQLARFASKSYVEKEED</sequence>
<evidence type="ECO:0000255" key="1"/>
<evidence type="ECO:0000256" key="2">
    <source>
        <dbReference type="SAM" id="MobiDB-lite"/>
    </source>
</evidence>
<evidence type="ECO:0000269" key="3">
    <source>
    </source>
</evidence>
<evidence type="ECO:0000305" key="4"/>